<comment type="induction">
    <text>By wounding.</text>
</comment>
<keyword id="KW-0147">Chitin-binding</keyword>
<keyword id="KW-1015">Disulfide bond</keyword>
<keyword id="KW-1185">Reference proteome</keyword>
<keyword id="KW-0732">Signal</keyword>
<dbReference type="EMBL" id="X13497">
    <property type="protein sequence ID" value="CAA31852.1"/>
    <property type="molecule type" value="Genomic_DNA"/>
</dbReference>
<dbReference type="PIR" id="S04927">
    <property type="entry name" value="S04927"/>
</dbReference>
<dbReference type="RefSeq" id="NP_001275628.1">
    <property type="nucleotide sequence ID" value="NM_001288699.1"/>
</dbReference>
<dbReference type="SMR" id="P09762"/>
<dbReference type="FunCoup" id="P09762">
    <property type="interactions" value="158"/>
</dbReference>
<dbReference type="CAZy" id="CBM18">
    <property type="family name" value="Carbohydrate-Binding Module Family 18"/>
</dbReference>
<dbReference type="EnsemblPlants" id="PGSC0003DMT400050018">
    <property type="protein sequence ID" value="PGSC0003DMT400050018"/>
    <property type="gene ID" value="PGSC0003DMG400019435"/>
</dbReference>
<dbReference type="EnsemblPlants" id="RHC01H1G3444.2.1">
    <property type="protein sequence ID" value="RHC01H1G3444.2.1"/>
    <property type="gene ID" value="RHC01H1G3444.2"/>
</dbReference>
<dbReference type="GeneID" id="102581743"/>
<dbReference type="Gramene" id="PGSC0003DMT400050018">
    <property type="protein sequence ID" value="PGSC0003DMT400050018"/>
    <property type="gene ID" value="PGSC0003DMG400019435"/>
</dbReference>
<dbReference type="Gramene" id="RHC01H1G3444.2.1">
    <property type="protein sequence ID" value="RHC01H1G3444.2.1"/>
    <property type="gene ID" value="RHC01H1G3444.2"/>
</dbReference>
<dbReference type="KEGG" id="sot:102581743"/>
<dbReference type="HOGENOM" id="CLU_1328439_0_0_1"/>
<dbReference type="InParanoid" id="P09762"/>
<dbReference type="OrthoDB" id="5985073at2759"/>
<dbReference type="Proteomes" id="UP000011115">
    <property type="component" value="Unassembled WGS sequence"/>
</dbReference>
<dbReference type="ExpressionAtlas" id="P09762">
    <property type="expression patterns" value="baseline and differential"/>
</dbReference>
<dbReference type="GO" id="GO:0008061">
    <property type="term" value="F:chitin binding"/>
    <property type="evidence" value="ECO:0007669"/>
    <property type="project" value="UniProtKB-KW"/>
</dbReference>
<dbReference type="GO" id="GO:0004540">
    <property type="term" value="F:RNA nuclease activity"/>
    <property type="evidence" value="ECO:0007669"/>
    <property type="project" value="InterPro"/>
</dbReference>
<dbReference type="GO" id="GO:0042742">
    <property type="term" value="P:defense response to bacterium"/>
    <property type="evidence" value="ECO:0007669"/>
    <property type="project" value="InterPro"/>
</dbReference>
<dbReference type="GO" id="GO:0050832">
    <property type="term" value="P:defense response to fungus"/>
    <property type="evidence" value="ECO:0007669"/>
    <property type="project" value="InterPro"/>
</dbReference>
<dbReference type="CDD" id="cd06921">
    <property type="entry name" value="ChtBD1_GH19_hevein"/>
    <property type="match status" value="1"/>
</dbReference>
<dbReference type="CDD" id="cd22777">
    <property type="entry name" value="DPBB_barwin-like"/>
    <property type="match status" value="1"/>
</dbReference>
<dbReference type="FunFam" id="3.30.60.10:FF:000001">
    <property type="entry name" value="Basic endochitinase"/>
    <property type="match status" value="1"/>
</dbReference>
<dbReference type="FunFam" id="2.40.40.10:FF:000007">
    <property type="entry name" value="Papaya barwin-like protein"/>
    <property type="match status" value="1"/>
</dbReference>
<dbReference type="Gene3D" id="3.30.60.10">
    <property type="entry name" value="Endochitinase-like"/>
    <property type="match status" value="1"/>
</dbReference>
<dbReference type="Gene3D" id="2.40.40.10">
    <property type="entry name" value="RlpA-like domain"/>
    <property type="match status" value="1"/>
</dbReference>
<dbReference type="InterPro" id="IPR018226">
    <property type="entry name" value="Barwin_CS"/>
</dbReference>
<dbReference type="InterPro" id="IPR001153">
    <property type="entry name" value="Barwin_dom"/>
</dbReference>
<dbReference type="InterPro" id="IPR001002">
    <property type="entry name" value="Chitin-bd_1"/>
</dbReference>
<dbReference type="InterPro" id="IPR018371">
    <property type="entry name" value="Chitin-binding_1_CS"/>
</dbReference>
<dbReference type="InterPro" id="IPR036861">
    <property type="entry name" value="Endochitinase-like_sf"/>
</dbReference>
<dbReference type="InterPro" id="IPR044301">
    <property type="entry name" value="PR4"/>
</dbReference>
<dbReference type="InterPro" id="IPR036908">
    <property type="entry name" value="RlpA-like_sf"/>
</dbReference>
<dbReference type="PANTHER" id="PTHR46351">
    <property type="entry name" value="WOUND-INDUCED PROTEIN WIN2"/>
    <property type="match status" value="1"/>
</dbReference>
<dbReference type="PANTHER" id="PTHR46351:SF3">
    <property type="entry name" value="WOUND-INDUCED PROTEIN WIN2"/>
    <property type="match status" value="1"/>
</dbReference>
<dbReference type="Pfam" id="PF00967">
    <property type="entry name" value="Barwin"/>
    <property type="match status" value="1"/>
</dbReference>
<dbReference type="Pfam" id="PF00187">
    <property type="entry name" value="Chitin_bind_1"/>
    <property type="match status" value="1"/>
</dbReference>
<dbReference type="PRINTS" id="PR00602">
    <property type="entry name" value="BARWIN"/>
</dbReference>
<dbReference type="PRINTS" id="PR00451">
    <property type="entry name" value="CHITINBINDNG"/>
</dbReference>
<dbReference type="SMART" id="SM00270">
    <property type="entry name" value="ChtBD1"/>
    <property type="match status" value="1"/>
</dbReference>
<dbReference type="SUPFAM" id="SSF50685">
    <property type="entry name" value="Barwin-like endoglucanases"/>
    <property type="match status" value="1"/>
</dbReference>
<dbReference type="SUPFAM" id="SSF57016">
    <property type="entry name" value="Plant lectins/antimicrobial peptides"/>
    <property type="match status" value="1"/>
</dbReference>
<dbReference type="PROSITE" id="PS00771">
    <property type="entry name" value="BARWIN_1"/>
    <property type="match status" value="1"/>
</dbReference>
<dbReference type="PROSITE" id="PS00772">
    <property type="entry name" value="BARWIN_2"/>
    <property type="match status" value="1"/>
</dbReference>
<dbReference type="PROSITE" id="PS51174">
    <property type="entry name" value="BARWIN_3"/>
    <property type="match status" value="1"/>
</dbReference>
<dbReference type="PROSITE" id="PS00026">
    <property type="entry name" value="CHIT_BIND_I_1"/>
    <property type="match status" value="1"/>
</dbReference>
<dbReference type="PROSITE" id="PS50941">
    <property type="entry name" value="CHIT_BIND_I_2"/>
    <property type="match status" value="1"/>
</dbReference>
<feature type="signal peptide">
    <location>
        <begin position="1"/>
        <end position="25"/>
    </location>
</feature>
<feature type="chain" id="PRO_0000005286" description="Wound-induced protein WIN2">
    <location>
        <begin position="26"/>
        <end position="211"/>
    </location>
</feature>
<feature type="domain" description="Chitin-binding type-1" evidence="1">
    <location>
        <begin position="26"/>
        <end position="68"/>
    </location>
</feature>
<feature type="domain" description="Barwin" evidence="2">
    <location>
        <begin position="77"/>
        <end position="198"/>
    </location>
</feature>
<feature type="disulfide bond" evidence="1">
    <location>
        <begin position="28"/>
        <end position="43"/>
    </location>
</feature>
<feature type="disulfide bond" evidence="1">
    <location>
        <begin position="37"/>
        <end position="49"/>
    </location>
</feature>
<feature type="disulfide bond" evidence="1">
    <location>
        <begin position="42"/>
        <end position="56"/>
    </location>
</feature>
<feature type="disulfide bond" evidence="1">
    <location>
        <begin position="62"/>
        <end position="66"/>
    </location>
</feature>
<gene>
    <name type="primary">WIN2</name>
</gene>
<name>WIN2_SOLTU</name>
<accession>P09762</accession>
<proteinExistence type="evidence at transcript level"/>
<organism>
    <name type="scientific">Solanum tuberosum</name>
    <name type="common">Potato</name>
    <dbReference type="NCBI Taxonomy" id="4113"/>
    <lineage>
        <taxon>Eukaryota</taxon>
        <taxon>Viridiplantae</taxon>
        <taxon>Streptophyta</taxon>
        <taxon>Embryophyta</taxon>
        <taxon>Tracheophyta</taxon>
        <taxon>Spermatophyta</taxon>
        <taxon>Magnoliopsida</taxon>
        <taxon>eudicotyledons</taxon>
        <taxon>Gunneridae</taxon>
        <taxon>Pentapetalae</taxon>
        <taxon>asterids</taxon>
        <taxon>lamiids</taxon>
        <taxon>Solanales</taxon>
        <taxon>Solanaceae</taxon>
        <taxon>Solanoideae</taxon>
        <taxon>Solaneae</taxon>
        <taxon>Solanum</taxon>
    </lineage>
</organism>
<protein>
    <recommendedName>
        <fullName>Wound-induced protein WIN2</fullName>
    </recommendedName>
</protein>
<sequence>MVKLSCGPILLALVLCISLTSVANAQQCGRQRGGALCGNNLCCSQFGWCGSTPEYCSPSQGCQSQCTGSGPDPGQGGSAQNVRATYHIYNPQNVGWDLNAVSAYCSTWDANKPYAWRSKYGWTAFCGPVGPRGRDSCGKCLRVTNTRTGAQTTVRIVDQCSNGGLDLDINVFQQIDTDGVGNQQGHLIVNYQFVNCGDNVNVPLLSVVDKE</sequence>
<evidence type="ECO:0000255" key="1">
    <source>
        <dbReference type="PROSITE-ProRule" id="PRU00261"/>
    </source>
</evidence>
<evidence type="ECO:0000255" key="2">
    <source>
        <dbReference type="PROSITE-ProRule" id="PRU00527"/>
    </source>
</evidence>
<reference key="1">
    <citation type="journal article" date="1989" name="Mol. Gen. Genet.">
        <title>Differential expression within a family of novel wound-induced genes in potato.</title>
        <authorList>
            <person name="Stanford A."/>
            <person name="Bevan M."/>
            <person name="Northcote D."/>
        </authorList>
    </citation>
    <scope>NUCLEOTIDE SEQUENCE [GENOMIC DNA]</scope>
    <source>
        <strain>cv. Maris Piper</strain>
    </source>
</reference>
<reference key="2">
    <citation type="journal article" date="2011" name="Nature">
        <title>Genome sequence and analysis of the tuber crop potato.</title>
        <authorList>
            <consortium name="The Potato Genome Sequencing Consortium"/>
        </authorList>
    </citation>
    <scope>NUCLEOTIDE SEQUENCE [LARGE SCALE GENOMIC DNA]</scope>
    <source>
        <strain>cv. DM1-3 516 R44</strain>
    </source>
</reference>